<accession>R4GUQ1</accession>
<keyword id="KW-1015">Disulfide bond</keyword>
<keyword id="KW-0872">Ion channel impairing toxin</keyword>
<keyword id="KW-0528">Neurotoxin</keyword>
<keyword id="KW-0632">Potassium channel impairing toxin</keyword>
<keyword id="KW-0964">Secreted</keyword>
<keyword id="KW-0732">Signal</keyword>
<keyword id="KW-0800">Toxin</keyword>
<keyword id="KW-1220">Voltage-gated potassium channel impairing toxin</keyword>
<feature type="signal peptide" evidence="3">
    <location>
        <begin position="1"/>
        <end position="28"/>
    </location>
</feature>
<feature type="chain" id="PRO_0000424388" description="Potassium channel toxin alpha-KTx 29.2">
    <location>
        <begin position="29"/>
        <end position="60"/>
    </location>
</feature>
<feature type="disulfide bond" evidence="1">
    <location>
        <begin position="32"/>
        <end position="51"/>
    </location>
</feature>
<feature type="disulfide bond" evidence="1">
    <location>
        <begin position="40"/>
        <end position="56"/>
    </location>
</feature>
<feature type="disulfide bond" evidence="1">
    <location>
        <begin position="44"/>
        <end position="58"/>
    </location>
</feature>
<comment type="function">
    <text evidence="2">Weakly inhibits the Kv1.3/KCNA3 channel (1 uM of thetoxin inhibits currents by 13.2%) and Kv7.1/KCNQ1 channel (10 uM of the toxin inhibits currents by 27.7%).</text>
</comment>
<comment type="subcellular location">
    <subcellularLocation>
        <location evidence="1">Secreted</location>
    </subcellularLocation>
</comment>
<comment type="tissue specificity">
    <text evidence="5">Expressed by the venom gland.</text>
</comment>
<comment type="domain">
    <text evidence="4">Has the structural arrangement of an alpha-helix connected to antiparallel beta-sheets by disulfide bonds (CS-alpha/beta).</text>
</comment>
<comment type="similarity">
    <text evidence="4">Belongs to the short scorpion toxin superfamily. Potassium channel inhibitor family. Alpha-KTx 29 subfamily.</text>
</comment>
<sequence>MKSVCGVLIILVVLTTMLSISTFSTVGAEADCPISEAIKCVEKCKEKVEVCEPGVCKCSG</sequence>
<dbReference type="EMBL" id="EU163849">
    <property type="protein sequence ID" value="ABY26658.1"/>
    <property type="molecule type" value="mRNA"/>
</dbReference>
<dbReference type="SMR" id="R4GUQ1"/>
<dbReference type="GO" id="GO:0005576">
    <property type="term" value="C:extracellular region"/>
    <property type="evidence" value="ECO:0007669"/>
    <property type="project" value="UniProtKB-SubCell"/>
</dbReference>
<dbReference type="GO" id="GO:0015459">
    <property type="term" value="F:potassium channel regulator activity"/>
    <property type="evidence" value="ECO:0007669"/>
    <property type="project" value="UniProtKB-KW"/>
</dbReference>
<dbReference type="GO" id="GO:0090729">
    <property type="term" value="F:toxin activity"/>
    <property type="evidence" value="ECO:0007669"/>
    <property type="project" value="UniProtKB-KW"/>
</dbReference>
<reference key="1">
    <citation type="journal article" date="2012" name="PLoS ONE">
        <title>Structural and functional diversity of acidic scorpion potassium channel toxins.</title>
        <authorList>
            <person name="Chen Z.Y."/>
            <person name="Zeng D.Y."/>
            <person name="Hu Y.T."/>
            <person name="He Y.W."/>
            <person name="Pan N."/>
            <person name="Ding J.P."/>
            <person name="Cao Z.J."/>
            <person name="Liu M.L."/>
            <person name="Li W.X."/>
            <person name="Yi H."/>
            <person name="Jiang L."/>
            <person name="Wu Y.L."/>
        </authorList>
    </citation>
    <scope>NUCLEOTIDE SEQUENCE [MRNA]</scope>
    <source>
        <tissue>Venom gland</tissue>
    </source>
</reference>
<proteinExistence type="inferred from homology"/>
<protein>
    <recommendedName>
        <fullName>Potassium channel toxin alpha-KTx 29.2</fullName>
    </recommendedName>
    <alternativeName>
        <fullName>Neurotoxin KTx3</fullName>
    </alternativeName>
    <alternativeName>
        <fullName>Toxin LmKTx71</fullName>
    </alternativeName>
</protein>
<evidence type="ECO:0000250" key="1"/>
<evidence type="ECO:0000250" key="2">
    <source>
        <dbReference type="UniProtKB" id="D9U2A6"/>
    </source>
</evidence>
<evidence type="ECO:0000255" key="3"/>
<evidence type="ECO:0000305" key="4"/>
<evidence type="ECO:0000305" key="5">
    <source>
    </source>
</evidence>
<organism>
    <name type="scientific">Lychas mucronatus</name>
    <name type="common">Chinese swimming scorpion</name>
    <dbReference type="NCBI Taxonomy" id="172552"/>
    <lineage>
        <taxon>Eukaryota</taxon>
        <taxon>Metazoa</taxon>
        <taxon>Ecdysozoa</taxon>
        <taxon>Arthropoda</taxon>
        <taxon>Chelicerata</taxon>
        <taxon>Arachnida</taxon>
        <taxon>Scorpiones</taxon>
        <taxon>Buthida</taxon>
        <taxon>Buthoidea</taxon>
        <taxon>Buthidae</taxon>
        <taxon>Lychas</taxon>
    </lineage>
</organism>
<name>KA292_LYCMC</name>